<protein>
    <recommendedName>
        <fullName evidence="1">Ribonuclease 3</fullName>
        <ecNumber evidence="1">3.1.26.3</ecNumber>
    </recommendedName>
    <alternativeName>
        <fullName evidence="1">Ribonuclease III</fullName>
        <shortName evidence="1">RNase III</shortName>
    </alternativeName>
</protein>
<comment type="function">
    <text evidence="1">Digests double-stranded RNA. Involved in the processing of primary rRNA transcript to yield the immediate precursors to the large and small rRNAs (23S and 16S). Processes some mRNAs, and tRNAs when they are encoded in the rRNA operon. Processes pre-crRNA and tracrRNA of type II CRISPR loci if present in the organism.</text>
</comment>
<comment type="catalytic activity">
    <reaction evidence="1">
        <text>Endonucleolytic cleavage to 5'-phosphomonoester.</text>
        <dbReference type="EC" id="3.1.26.3"/>
    </reaction>
</comment>
<comment type="cofactor">
    <cofactor evidence="1">
        <name>Mg(2+)</name>
        <dbReference type="ChEBI" id="CHEBI:18420"/>
    </cofactor>
</comment>
<comment type="subunit">
    <text evidence="1">Homodimer.</text>
</comment>
<comment type="subcellular location">
    <subcellularLocation>
        <location evidence="1">Cytoplasm</location>
    </subcellularLocation>
</comment>
<comment type="similarity">
    <text evidence="1">Belongs to the ribonuclease III family.</text>
</comment>
<dbReference type="EC" id="3.1.26.3" evidence="1"/>
<dbReference type="EMBL" id="CP000262">
    <property type="protein sequence ID" value="ABF37408.1"/>
    <property type="molecule type" value="Genomic_DNA"/>
</dbReference>
<dbReference type="SMR" id="Q1J7V3"/>
<dbReference type="KEGG" id="spi:MGAS10750_Spy0458"/>
<dbReference type="HOGENOM" id="CLU_000907_1_3_9"/>
<dbReference type="Proteomes" id="UP000002434">
    <property type="component" value="Chromosome"/>
</dbReference>
<dbReference type="GO" id="GO:0005737">
    <property type="term" value="C:cytoplasm"/>
    <property type="evidence" value="ECO:0007669"/>
    <property type="project" value="UniProtKB-SubCell"/>
</dbReference>
<dbReference type="GO" id="GO:0003725">
    <property type="term" value="F:double-stranded RNA binding"/>
    <property type="evidence" value="ECO:0007669"/>
    <property type="project" value="TreeGrafter"/>
</dbReference>
<dbReference type="GO" id="GO:0046872">
    <property type="term" value="F:metal ion binding"/>
    <property type="evidence" value="ECO:0007669"/>
    <property type="project" value="UniProtKB-KW"/>
</dbReference>
<dbReference type="GO" id="GO:0004525">
    <property type="term" value="F:ribonuclease III activity"/>
    <property type="evidence" value="ECO:0007669"/>
    <property type="project" value="UniProtKB-UniRule"/>
</dbReference>
<dbReference type="GO" id="GO:0019843">
    <property type="term" value="F:rRNA binding"/>
    <property type="evidence" value="ECO:0007669"/>
    <property type="project" value="UniProtKB-KW"/>
</dbReference>
<dbReference type="GO" id="GO:0006397">
    <property type="term" value="P:mRNA processing"/>
    <property type="evidence" value="ECO:0007669"/>
    <property type="project" value="UniProtKB-UniRule"/>
</dbReference>
<dbReference type="GO" id="GO:0010468">
    <property type="term" value="P:regulation of gene expression"/>
    <property type="evidence" value="ECO:0007669"/>
    <property type="project" value="TreeGrafter"/>
</dbReference>
<dbReference type="GO" id="GO:0006364">
    <property type="term" value="P:rRNA processing"/>
    <property type="evidence" value="ECO:0007669"/>
    <property type="project" value="UniProtKB-UniRule"/>
</dbReference>
<dbReference type="GO" id="GO:0008033">
    <property type="term" value="P:tRNA processing"/>
    <property type="evidence" value="ECO:0007669"/>
    <property type="project" value="UniProtKB-KW"/>
</dbReference>
<dbReference type="CDD" id="cd10845">
    <property type="entry name" value="DSRM_RNAse_III_family"/>
    <property type="match status" value="1"/>
</dbReference>
<dbReference type="CDD" id="cd00593">
    <property type="entry name" value="RIBOc"/>
    <property type="match status" value="1"/>
</dbReference>
<dbReference type="FunFam" id="1.10.1520.10:FF:000001">
    <property type="entry name" value="Ribonuclease 3"/>
    <property type="match status" value="1"/>
</dbReference>
<dbReference type="FunFam" id="3.30.160.20:FF:000003">
    <property type="entry name" value="Ribonuclease 3"/>
    <property type="match status" value="1"/>
</dbReference>
<dbReference type="Gene3D" id="3.30.160.20">
    <property type="match status" value="1"/>
</dbReference>
<dbReference type="Gene3D" id="1.10.1520.10">
    <property type="entry name" value="Ribonuclease III domain"/>
    <property type="match status" value="1"/>
</dbReference>
<dbReference type="HAMAP" id="MF_00104">
    <property type="entry name" value="RNase_III"/>
    <property type="match status" value="1"/>
</dbReference>
<dbReference type="InterPro" id="IPR014720">
    <property type="entry name" value="dsRBD_dom"/>
</dbReference>
<dbReference type="InterPro" id="IPR011907">
    <property type="entry name" value="RNase_III"/>
</dbReference>
<dbReference type="InterPro" id="IPR000999">
    <property type="entry name" value="RNase_III_dom"/>
</dbReference>
<dbReference type="InterPro" id="IPR036389">
    <property type="entry name" value="RNase_III_sf"/>
</dbReference>
<dbReference type="NCBIfam" id="TIGR02191">
    <property type="entry name" value="RNaseIII"/>
    <property type="match status" value="1"/>
</dbReference>
<dbReference type="PANTHER" id="PTHR11207:SF0">
    <property type="entry name" value="RIBONUCLEASE 3"/>
    <property type="match status" value="1"/>
</dbReference>
<dbReference type="PANTHER" id="PTHR11207">
    <property type="entry name" value="RIBONUCLEASE III"/>
    <property type="match status" value="1"/>
</dbReference>
<dbReference type="Pfam" id="PF00035">
    <property type="entry name" value="dsrm"/>
    <property type="match status" value="1"/>
</dbReference>
<dbReference type="Pfam" id="PF14622">
    <property type="entry name" value="Ribonucleas_3_3"/>
    <property type="match status" value="1"/>
</dbReference>
<dbReference type="SMART" id="SM00358">
    <property type="entry name" value="DSRM"/>
    <property type="match status" value="1"/>
</dbReference>
<dbReference type="SMART" id="SM00535">
    <property type="entry name" value="RIBOc"/>
    <property type="match status" value="1"/>
</dbReference>
<dbReference type="SUPFAM" id="SSF54768">
    <property type="entry name" value="dsRNA-binding domain-like"/>
    <property type="match status" value="1"/>
</dbReference>
<dbReference type="SUPFAM" id="SSF69065">
    <property type="entry name" value="RNase III domain-like"/>
    <property type="match status" value="1"/>
</dbReference>
<dbReference type="PROSITE" id="PS50137">
    <property type="entry name" value="DS_RBD"/>
    <property type="match status" value="1"/>
</dbReference>
<dbReference type="PROSITE" id="PS00517">
    <property type="entry name" value="RNASE_3_1"/>
    <property type="match status" value="1"/>
</dbReference>
<dbReference type="PROSITE" id="PS50142">
    <property type="entry name" value="RNASE_3_2"/>
    <property type="match status" value="1"/>
</dbReference>
<proteinExistence type="inferred from homology"/>
<reference key="1">
    <citation type="journal article" date="2006" name="Proc. Natl. Acad. Sci. U.S.A.">
        <title>Molecular genetic anatomy of inter- and intraserotype variation in the human bacterial pathogen group A Streptococcus.</title>
        <authorList>
            <person name="Beres S.B."/>
            <person name="Richter E.W."/>
            <person name="Nagiec M.J."/>
            <person name="Sumby P."/>
            <person name="Porcella S.F."/>
            <person name="DeLeo F.R."/>
            <person name="Musser J.M."/>
        </authorList>
    </citation>
    <scope>NUCLEOTIDE SEQUENCE [LARGE SCALE GENOMIC DNA]</scope>
    <source>
        <strain>MGAS10750</strain>
    </source>
</reference>
<gene>
    <name evidence="1" type="primary">rnc</name>
    <name type="ordered locus">MGAS10750_Spy0458</name>
</gene>
<sequence>MKQLEELLSTSFDIQFNDLTLLETAFTHTSYANEHRLLNVSHNERLEFLGDAVLQLIISEYLFAKYPKKTEGDMSKLRSMIVREESLAGFSRFCSFDAYIKLGKGEEKSGGRRRDTILGDLFEAFLGALLLDKGIDAVRRFLKQVMIPQVEKGNFERVKDYKTCLQEFLQTKGDVAIDYQVISEKGPAHAKQFEVSIVVNGAVLSKGLGKSKKLAEQDAAKNALAQLSEV</sequence>
<name>RNC_STRPF</name>
<feature type="chain" id="PRO_1000075838" description="Ribonuclease 3">
    <location>
        <begin position="1"/>
        <end position="230"/>
    </location>
</feature>
<feature type="domain" description="RNase III" evidence="1">
    <location>
        <begin position="1"/>
        <end position="134"/>
    </location>
</feature>
<feature type="domain" description="DRBM" evidence="1">
    <location>
        <begin position="160"/>
        <end position="229"/>
    </location>
</feature>
<feature type="active site" evidence="1">
    <location>
        <position position="51"/>
    </location>
</feature>
<feature type="active site" evidence="1">
    <location>
        <position position="123"/>
    </location>
</feature>
<feature type="binding site" evidence="1">
    <location>
        <position position="47"/>
    </location>
    <ligand>
        <name>Mg(2+)</name>
        <dbReference type="ChEBI" id="CHEBI:18420"/>
    </ligand>
</feature>
<feature type="binding site" evidence="1">
    <location>
        <position position="120"/>
    </location>
    <ligand>
        <name>Mg(2+)</name>
        <dbReference type="ChEBI" id="CHEBI:18420"/>
    </ligand>
</feature>
<feature type="binding site" evidence="1">
    <location>
        <position position="123"/>
    </location>
    <ligand>
        <name>Mg(2+)</name>
        <dbReference type="ChEBI" id="CHEBI:18420"/>
    </ligand>
</feature>
<evidence type="ECO:0000255" key="1">
    <source>
        <dbReference type="HAMAP-Rule" id="MF_00104"/>
    </source>
</evidence>
<organism>
    <name type="scientific">Streptococcus pyogenes serotype M4 (strain MGAS10750)</name>
    <dbReference type="NCBI Taxonomy" id="370554"/>
    <lineage>
        <taxon>Bacteria</taxon>
        <taxon>Bacillati</taxon>
        <taxon>Bacillota</taxon>
        <taxon>Bacilli</taxon>
        <taxon>Lactobacillales</taxon>
        <taxon>Streptococcaceae</taxon>
        <taxon>Streptococcus</taxon>
    </lineage>
</organism>
<accession>Q1J7V3</accession>
<keyword id="KW-0963">Cytoplasm</keyword>
<keyword id="KW-0255">Endonuclease</keyword>
<keyword id="KW-0378">Hydrolase</keyword>
<keyword id="KW-0460">Magnesium</keyword>
<keyword id="KW-0479">Metal-binding</keyword>
<keyword id="KW-0507">mRNA processing</keyword>
<keyword id="KW-0540">Nuclease</keyword>
<keyword id="KW-0694">RNA-binding</keyword>
<keyword id="KW-0698">rRNA processing</keyword>
<keyword id="KW-0699">rRNA-binding</keyword>
<keyword id="KW-0819">tRNA processing</keyword>